<organism>
    <name type="scientific">Escherichia coli (strain SMS-3-5 / SECEC)</name>
    <dbReference type="NCBI Taxonomy" id="439855"/>
    <lineage>
        <taxon>Bacteria</taxon>
        <taxon>Pseudomonadati</taxon>
        <taxon>Pseudomonadota</taxon>
        <taxon>Gammaproteobacteria</taxon>
        <taxon>Enterobacterales</taxon>
        <taxon>Enterobacteriaceae</taxon>
        <taxon>Escherichia</taxon>
    </lineage>
</organism>
<comment type="function">
    <text evidence="1">Component of the tagatose-1,6-bisphosphate aldolase GatYZ that is required for full activity and stability of the Y subunit. Could have a chaperone-like function for the proper and stable folding of GatY. When expressed alone, GatZ does not show any aldolase activity. Is involved in the catabolism of galactitol.</text>
</comment>
<comment type="pathway">
    <text evidence="1">Carbohydrate metabolism; D-tagatose 6-phosphate degradation; D-glyceraldehyde 3-phosphate and glycerone phosphate from D-tagatose 6-phosphate: step 2/2.</text>
</comment>
<comment type="subunit">
    <text evidence="1">Forms a complex with GatY.</text>
</comment>
<comment type="similarity">
    <text evidence="1">Belongs to the GatZ/KbaZ family. GatZ subfamily.</text>
</comment>
<sequence>MKTLIARHKAGEHIGICSVCSAHPLVIEAALAFDRNSTRKVLIEATSNQVNQFGGYTGMTPADFREFVFAIANKVGFARERIILGGDHLGPNCWQQENADAAMEKSVELVKAYVRAGFSKIHLDASMSCAGDPIPLAPETVAERAAVLCLAAESVATDCQREQLSYVIGTEVPVPGGEASAIQSVHITQVEDAANTLRTHQKAFIARGLAEALTRVIAIVVQPGVEFDHSNIIHYQAQEAQALAQWIEKTKMVYEAHSTDYQTQAAYRELVRDHFAILKVGPALTFALREAVFALAQIEQELIAPENRSGCLAVIEEVMLDEPQYWKKYYRTGFHDSLLDIRYSLSDRIRYYWPHSRIKNSVETMMVNLEGVDIPLGMISQYLPKQFERIQSGELSAIPHQLIMDKIYDVLRAYRYGCAE</sequence>
<reference key="1">
    <citation type="journal article" date="2008" name="J. Bacteriol.">
        <title>Insights into the environmental resistance gene pool from the genome sequence of the multidrug-resistant environmental isolate Escherichia coli SMS-3-5.</title>
        <authorList>
            <person name="Fricke W.F."/>
            <person name="Wright M.S."/>
            <person name="Lindell A.H."/>
            <person name="Harkins D.M."/>
            <person name="Baker-Austin C."/>
            <person name="Ravel J."/>
            <person name="Stepanauskas R."/>
        </authorList>
    </citation>
    <scope>NUCLEOTIDE SEQUENCE [LARGE SCALE GENOMIC DNA]</scope>
    <source>
        <strain>SMS-3-5 / SECEC</strain>
    </source>
</reference>
<feature type="chain" id="PRO_0000372493" description="D-tagatose-1,6-bisphosphate aldolase subunit GatZ">
    <location>
        <begin position="1"/>
        <end position="420"/>
    </location>
</feature>
<keyword id="KW-0298">Galactitol metabolism</keyword>
<name>GATZ_ECOSM</name>
<dbReference type="EMBL" id="CP000970">
    <property type="protein sequence ID" value="ACB17032.1"/>
    <property type="molecule type" value="Genomic_DNA"/>
</dbReference>
<dbReference type="RefSeq" id="WP_000853855.1">
    <property type="nucleotide sequence ID" value="NC_010498.1"/>
</dbReference>
<dbReference type="SMR" id="B1LN93"/>
<dbReference type="KEGG" id="ecm:EcSMS35_0969"/>
<dbReference type="HOGENOM" id="CLU_053334_0_0_6"/>
<dbReference type="UniPathway" id="UPA00704">
    <property type="reaction ID" value="UER00716"/>
</dbReference>
<dbReference type="Proteomes" id="UP000007011">
    <property type="component" value="Chromosome"/>
</dbReference>
<dbReference type="GO" id="GO:0005886">
    <property type="term" value="C:plasma membrane"/>
    <property type="evidence" value="ECO:0007669"/>
    <property type="project" value="TreeGrafter"/>
</dbReference>
<dbReference type="GO" id="GO:2001059">
    <property type="term" value="P:D-tagatose 6-phosphate catabolic process"/>
    <property type="evidence" value="ECO:0007669"/>
    <property type="project" value="UniProtKB-UniRule"/>
</dbReference>
<dbReference type="GO" id="GO:0019402">
    <property type="term" value="P:galactitol metabolic process"/>
    <property type="evidence" value="ECO:0007669"/>
    <property type="project" value="UniProtKB-KW"/>
</dbReference>
<dbReference type="GO" id="GO:0009401">
    <property type="term" value="P:phosphoenolpyruvate-dependent sugar phosphotransferase system"/>
    <property type="evidence" value="ECO:0007669"/>
    <property type="project" value="TreeGrafter"/>
</dbReference>
<dbReference type="FunFam" id="3.20.20.70:FF:000141">
    <property type="entry name" value="D-tagatose-1,6-bisphosphate aldolase subunit GatZ"/>
    <property type="match status" value="1"/>
</dbReference>
<dbReference type="Gene3D" id="3.20.20.70">
    <property type="entry name" value="Aldolase class I"/>
    <property type="match status" value="1"/>
</dbReference>
<dbReference type="Gene3D" id="1.10.400.20">
    <property type="entry name" value="putative tagatose 6-phosphate kinase domain like"/>
    <property type="match status" value="1"/>
</dbReference>
<dbReference type="HAMAP" id="MF_01296">
    <property type="entry name" value="Tagatose_aldol_GatZ"/>
    <property type="match status" value="1"/>
</dbReference>
<dbReference type="InterPro" id="IPR013785">
    <property type="entry name" value="Aldolase_TIM"/>
</dbReference>
<dbReference type="InterPro" id="IPR012062">
    <property type="entry name" value="GatZ/KbaZ-like"/>
</dbReference>
<dbReference type="InterPro" id="IPR050303">
    <property type="entry name" value="GatZ_KbaZ_carbometab"/>
</dbReference>
<dbReference type="InterPro" id="IPR023436">
    <property type="entry name" value="TagBP_ald_GatZ"/>
</dbReference>
<dbReference type="NCBIfam" id="TIGR02810">
    <property type="entry name" value="agaZ_gatZ"/>
    <property type="match status" value="1"/>
</dbReference>
<dbReference type="NCBIfam" id="NF011626">
    <property type="entry name" value="PRK15052.1"/>
    <property type="match status" value="1"/>
</dbReference>
<dbReference type="PANTHER" id="PTHR32502:SF12">
    <property type="entry name" value="D-TAGATOSE-1,6-BISPHOSPHATE ALDOLASE SUBUNIT GATZ"/>
    <property type="match status" value="1"/>
</dbReference>
<dbReference type="PANTHER" id="PTHR32502">
    <property type="entry name" value="N-ACETYLGALACTOSAMINE PERMEASE II COMPONENT-RELATED"/>
    <property type="match status" value="1"/>
</dbReference>
<dbReference type="Pfam" id="PF08013">
    <property type="entry name" value="GatZ_KbaZ-like"/>
    <property type="match status" value="1"/>
</dbReference>
<dbReference type="PIRSF" id="PIRSF009264">
    <property type="entry name" value="TagBP_ald_AgaZ"/>
    <property type="match status" value="1"/>
</dbReference>
<dbReference type="SUPFAM" id="SSF51569">
    <property type="entry name" value="Aldolase"/>
    <property type="match status" value="1"/>
</dbReference>
<protein>
    <recommendedName>
        <fullName evidence="1">D-tagatose-1,6-bisphosphate aldolase subunit GatZ</fullName>
    </recommendedName>
</protein>
<evidence type="ECO:0000255" key="1">
    <source>
        <dbReference type="HAMAP-Rule" id="MF_01296"/>
    </source>
</evidence>
<proteinExistence type="inferred from homology"/>
<gene>
    <name evidence="1" type="primary">gatZ</name>
    <name type="ordered locus">EcSMS35_0969</name>
</gene>
<accession>B1LN93</accession>